<comment type="function">
    <text evidence="1">Produces ATP from ADP in the presence of a proton gradient across the membrane.</text>
</comment>
<comment type="subunit">
    <text>F-type ATPases have 2 components, CF(1) - the catalytic core - and CF(0) - the membrane proton channel. CF(1) has five subunits: alpha(3), beta(3), gamma(1), delta(1), epsilon(1). CF(0) has three main subunits: a, b and c.</text>
</comment>
<comment type="subcellular location">
    <subcellularLocation>
        <location evidence="1">Cell membrane</location>
        <topology evidence="1">Peripheral membrane protein</topology>
    </subcellularLocation>
</comment>
<comment type="similarity">
    <text evidence="1">Belongs to the ATPase epsilon chain family.</text>
</comment>
<keyword id="KW-0066">ATP synthesis</keyword>
<keyword id="KW-1003">Cell membrane</keyword>
<keyword id="KW-0139">CF(1)</keyword>
<keyword id="KW-0375">Hydrogen ion transport</keyword>
<keyword id="KW-0406">Ion transport</keyword>
<keyword id="KW-0472">Membrane</keyword>
<keyword id="KW-1185">Reference proteome</keyword>
<keyword id="KW-0813">Transport</keyword>
<sequence>MANLTKLKIVTPYAQILEKDVYSVELKTSEGRITVLPDHNPLMSTIENHVAYIRELPNTPRKPLLLLDGIVYIEQHQVRVFSDYFKFLDEIQIDEINSSLNQLKHDLNNEEDDKKKLQLKSKIKLNESILIAYKDR</sequence>
<organism>
    <name type="scientific">Ureaplasma parvum serovar 3 (strain ATCC 700970)</name>
    <dbReference type="NCBI Taxonomy" id="273119"/>
    <lineage>
        <taxon>Bacteria</taxon>
        <taxon>Bacillati</taxon>
        <taxon>Mycoplasmatota</taxon>
        <taxon>Mycoplasmoidales</taxon>
        <taxon>Mycoplasmoidaceae</taxon>
        <taxon>Ureaplasma</taxon>
    </lineage>
</organism>
<feature type="chain" id="PRO_0000188234" description="ATP synthase epsilon chain">
    <location>
        <begin position="1"/>
        <end position="136"/>
    </location>
</feature>
<gene>
    <name evidence="1" type="primary">atpC</name>
    <name type="ordered locus">UU128</name>
</gene>
<dbReference type="EMBL" id="AF222894">
    <property type="protein sequence ID" value="AAF30534.1"/>
    <property type="molecule type" value="Genomic_DNA"/>
</dbReference>
<dbReference type="RefSeq" id="WP_006688897.1">
    <property type="nucleotide sequence ID" value="NC_002162.1"/>
</dbReference>
<dbReference type="SMR" id="Q9PR16"/>
<dbReference type="STRING" id="273119.UU128"/>
<dbReference type="EnsemblBacteria" id="AAF30534">
    <property type="protein sequence ID" value="AAF30534"/>
    <property type="gene ID" value="UU128"/>
</dbReference>
<dbReference type="GeneID" id="29672196"/>
<dbReference type="KEGG" id="uur:UU128"/>
<dbReference type="eggNOG" id="COG0355">
    <property type="taxonomic scope" value="Bacteria"/>
</dbReference>
<dbReference type="HOGENOM" id="CLU_1874552_0_0_14"/>
<dbReference type="OrthoDB" id="389606at2"/>
<dbReference type="Proteomes" id="UP000000423">
    <property type="component" value="Chromosome"/>
</dbReference>
<dbReference type="GO" id="GO:0005886">
    <property type="term" value="C:plasma membrane"/>
    <property type="evidence" value="ECO:0007669"/>
    <property type="project" value="UniProtKB-SubCell"/>
</dbReference>
<dbReference type="GO" id="GO:0045259">
    <property type="term" value="C:proton-transporting ATP synthase complex"/>
    <property type="evidence" value="ECO:0007669"/>
    <property type="project" value="UniProtKB-KW"/>
</dbReference>
<dbReference type="GO" id="GO:0005524">
    <property type="term" value="F:ATP binding"/>
    <property type="evidence" value="ECO:0007669"/>
    <property type="project" value="UniProtKB-UniRule"/>
</dbReference>
<dbReference type="GO" id="GO:0046933">
    <property type="term" value="F:proton-transporting ATP synthase activity, rotational mechanism"/>
    <property type="evidence" value="ECO:0007669"/>
    <property type="project" value="UniProtKB-UniRule"/>
</dbReference>
<dbReference type="CDD" id="cd12152">
    <property type="entry name" value="F1-ATPase_delta"/>
    <property type="match status" value="1"/>
</dbReference>
<dbReference type="Gene3D" id="2.60.15.10">
    <property type="entry name" value="F0F1 ATP synthase delta/epsilon subunit, N-terminal"/>
    <property type="match status" value="1"/>
</dbReference>
<dbReference type="HAMAP" id="MF_00530">
    <property type="entry name" value="ATP_synth_epsil_bac"/>
    <property type="match status" value="1"/>
</dbReference>
<dbReference type="InterPro" id="IPR001469">
    <property type="entry name" value="ATP_synth_F1_dsu/esu"/>
</dbReference>
<dbReference type="InterPro" id="IPR020546">
    <property type="entry name" value="ATP_synth_F1_dsu/esu_N"/>
</dbReference>
<dbReference type="InterPro" id="IPR036771">
    <property type="entry name" value="ATPsynth_dsu/esu_N"/>
</dbReference>
<dbReference type="NCBIfam" id="TIGR01216">
    <property type="entry name" value="ATP_synt_epsi"/>
    <property type="match status" value="1"/>
</dbReference>
<dbReference type="Pfam" id="PF02823">
    <property type="entry name" value="ATP-synt_DE_N"/>
    <property type="match status" value="1"/>
</dbReference>
<dbReference type="SUPFAM" id="SSF51344">
    <property type="entry name" value="Epsilon subunit of F1F0-ATP synthase N-terminal domain"/>
    <property type="match status" value="1"/>
</dbReference>
<proteinExistence type="inferred from homology"/>
<reference key="1">
    <citation type="journal article" date="2000" name="Nature">
        <title>The complete sequence of the mucosal pathogen Ureaplasma urealyticum.</title>
        <authorList>
            <person name="Glass J.I."/>
            <person name="Lefkowitz E.J."/>
            <person name="Glass J.S."/>
            <person name="Heiner C.R."/>
            <person name="Chen E.Y."/>
            <person name="Cassell G.H."/>
        </authorList>
    </citation>
    <scope>NUCLEOTIDE SEQUENCE [LARGE SCALE GENOMIC DNA]</scope>
    <source>
        <strain>ATCC 700970</strain>
    </source>
</reference>
<accession>Q9PR16</accession>
<protein>
    <recommendedName>
        <fullName evidence="1">ATP synthase epsilon chain</fullName>
    </recommendedName>
    <alternativeName>
        <fullName evidence="1">ATP synthase F1 sector epsilon subunit</fullName>
    </alternativeName>
    <alternativeName>
        <fullName evidence="1">F-ATPase epsilon subunit</fullName>
    </alternativeName>
</protein>
<evidence type="ECO:0000255" key="1">
    <source>
        <dbReference type="HAMAP-Rule" id="MF_00530"/>
    </source>
</evidence>
<name>ATPE_UREPA</name>